<feature type="chain" id="PRO_0000087452" description="Glycogen debranching enzyme">
    <location>
        <begin position="1"/>
        <end position="1536"/>
    </location>
</feature>
<feature type="region of interest" description="4-alpha-glucanotransferase">
    <location>
        <begin position="1"/>
        <end status="unknown"/>
    </location>
</feature>
<feature type="region of interest" description="Amylo-1,6-glucosidase">
    <location>
        <begin status="unknown"/>
        <end position="1536"/>
    </location>
</feature>
<feature type="active site" evidence="1">
    <location>
        <position position="535"/>
    </location>
</feature>
<feature type="active site" evidence="1">
    <location>
        <position position="538"/>
    </location>
</feature>
<feature type="active site" evidence="1">
    <location>
        <position position="670"/>
    </location>
</feature>
<feature type="sequence conflict" description="In Ref. 1; BAA34996." evidence="6" ref="1">
    <original>R</original>
    <variation>K</variation>
    <location>
        <position position="368"/>
    </location>
</feature>
<feature type="sequence conflict" description="In Ref. 1; BAA34996." evidence="6" ref="1">
    <original>N</original>
    <variation>Y</variation>
    <location>
        <position position="536"/>
    </location>
</feature>
<feature type="sequence conflict" description="In Ref. 1; BAA34996." evidence="6" ref="1">
    <original>D</original>
    <variation>N</variation>
    <location>
        <position position="774"/>
    </location>
</feature>
<feature type="sequence conflict" description="In Ref. 1; BAA34996." evidence="6" ref="1">
    <original>R</original>
    <variation>K</variation>
    <location>
        <position position="1180"/>
    </location>
</feature>
<feature type="sequence conflict" description="In Ref. 1; BAA34996." evidence="6" ref="1">
    <original>K</original>
    <variation>N</variation>
    <location>
        <position position="1289"/>
    </location>
</feature>
<feature type="sequence conflict" description="In Ref. 1; BAA34996." evidence="6" ref="1">
    <original>F</original>
    <variation>S</variation>
    <location>
        <position position="1489"/>
    </location>
</feature>
<keyword id="KW-0963">Cytoplasm</keyword>
<keyword id="KW-0903">Direct protein sequencing</keyword>
<keyword id="KW-0320">Glycogen biosynthesis</keyword>
<keyword id="KW-0326">Glycosidase</keyword>
<keyword id="KW-0328">Glycosyltransferase</keyword>
<keyword id="KW-0378">Hydrolase</keyword>
<keyword id="KW-0496">Mitochondrion</keyword>
<keyword id="KW-0511">Multifunctional enzyme</keyword>
<keyword id="KW-1185">Reference proteome</keyword>
<keyword id="KW-0808">Transferase</keyword>
<comment type="function">
    <text evidence="2 5">Multifunctional enzyme acting as 1,4-alpha-D-glucan:1,4-alpha-D-glucan 4-alpha-D-glycosyltransferase and amylo-1,6-glucosidase in glycogen degradation.</text>
</comment>
<comment type="catalytic activity">
    <reaction>
        <text>Transfers a segment of a (1-&gt;4)-alpha-D-glucan to a new position in an acceptor, which may be glucose or a (1-&gt;4)-alpha-D-glucan.</text>
        <dbReference type="EC" id="2.4.1.25"/>
    </reaction>
</comment>
<comment type="catalytic activity">
    <reaction>
        <text>Hydrolysis of (1-&gt;6)-alpha-D-glucosidic branch linkages in glycogen phosphorylase limit dextrin.</text>
        <dbReference type="EC" id="3.2.1.33"/>
    </reaction>
</comment>
<comment type="activity regulation">
    <text evidence="5">Activity is inhibited by IGD1.</text>
</comment>
<comment type="subunit">
    <text evidence="5">Interacts with IGD1.</text>
</comment>
<comment type="subcellular location">
    <subcellularLocation>
        <location evidence="3">Mitochondrion</location>
    </subcellularLocation>
    <subcellularLocation>
        <location evidence="3">Cytoplasm</location>
    </subcellularLocation>
</comment>
<comment type="miscellaneous">
    <text evidence="4">Present with 125 molecules/cell in log phase SD medium.</text>
</comment>
<comment type="similarity">
    <text evidence="6">Belongs to the glycogen debranching enzyme family.</text>
</comment>
<name>GDE_YEAST</name>
<accession>Q06625</accession>
<accession>D6W4I4</accession>
<accession>O93808</accession>
<protein>
    <recommendedName>
        <fullName>Glycogen debranching enzyme</fullName>
    </recommendedName>
    <alternativeName>
        <fullName>Glycogen debrancher</fullName>
    </alternativeName>
    <domain>
        <recommendedName>
            <fullName>4-alpha-glucanotransferase</fullName>
            <ecNumber>2.4.1.25</ecNumber>
        </recommendedName>
        <alternativeName>
            <fullName>Oligo-1,4-1,4-glucantransferase</fullName>
        </alternativeName>
    </domain>
    <domain>
        <recommendedName>
            <fullName>Amylo-alpha-1,6-glucosidase</fullName>
            <shortName>Amylo-1,6-glucosidase</shortName>
            <ecNumber>3.2.1.33</ecNumber>
        </recommendedName>
        <alternativeName>
            <fullName>Dextrin 6-alpha-D-glucosidase</fullName>
        </alternativeName>
    </domain>
</protein>
<sequence length="1536" mass="174972">MNRSLLLRLSDTGEPITSCSYGKGVLTLPPIPLPKDAPKDQPLYTVKLLVSAGSPVARDGLVWTNCPPDHNTPFKRDKFYKKIIHSSFHEDDCIDLNVYAPGSYCFYLSFRNDNEKLETTRKYYFVALPMLYINDQFLPLNSIALQSVVSKWLGSDWEPILSKIAAKNYNMVHFTPLQERGESNSPYSIYDQLQFDQEHFKSPEDVKNLVEHIHRDLNMLSLTDIVFNHTANNSPWLVEHPEAGYNHITAPHLISAIELDQELLNFSRNLKSWGYPTELKNIEDLFKIMDGIKVHVLGSLKLWEYYAVNVQTALRDIKAHWNDESNESYSFPENIKDISSDFVKLASFVKDNVTEPNFGTLGERNSNRINVPKFIQLLKLINDGGSDDSESSLATAQNILNEVNLPLYREYDDDVSEILEQLFNRIKYLRLDDGGPKQGPVTVDVPLTEPYFTRFKGKDGTDYALANNGWIWNGNPLVDFASQNSRAYLRREVIVWGDCVKLRYGKSPEDSPYLWERMSKYIEMNAKIFDGFRIDNCHSTPIHVGEYFLDLARKYNPNLYVVAELFSGSETLDCLFVERLGISSLIREAMQAWSEEELSRLVHKHGGRPIGSYKFVPMDDFSYPADINLNEEHCFNDSNDNSIRCVSEIMIPKILTATPPHALFMDCTHDNETPFEKRTVEDTLPNAALVALCSSAIGSVYGYDEIFPHLLNLVTEKRHYDISTPTGSPSIGITKVKATLNSIRTSIGEKAYDIEDSEMHVHHQGQYITFHRMDVKSGKGWYLIARMKFSDNDDPNETLPPVVLNQSTCSLRFSYALERVGDEIPNDDKFIKGIPTKLKELEGFDISYDDSKKISTIKLPNEFPQGSIAIFETQQNGVDESLDHFIRSGALKATSSLTLESINSVLYRSEPEEYDVSAGEGGAYIIPNFGKPVYCGLQGWVSVLRKIVFYNDLAHPLSANLRNGHWALDYTISRLNYYSDEAGINEVQNWLRSRFDRVKKLPSYLVPSYFALIIGILYGCCRLKAIQLMSRNIGKSTLFVQSLSMTSIQMVSRMKSTSILPGENVPSMAAGLPHFSVNYMRCWGRDVFISLRGMLLTTGRFDEAKAHILAFAKTLKHGLIPNLLDAGRNPRYNARDAAWFFLQAVQDYVYIVPDGEKILQEQVTRRFPLDDTYIPVDDPRAFSYSSTLEEIIYEILSRHAKGIKFREANAGPNLDRVMTDKGFNVEIHVDWSTGLIHGGSQYNCGTWMDKMGESEKAGSVGIPGTPRDGAAIEINGLLKSALRFVIELKNKGLFKFSDVETQDGGRIDFTEWNQLLQDNFEKRYYVPEDPSQDADYDVSAKLGVNRRGIYRDLYKSGKPYEDYQLRPNFAIAMTVAPELFVPEHAIKAITIADEVLRGPVGMRTLDPSDYNYRPYYNNGEDSDDFATSKGRNYHQGPEWVWLYGYFLRAFHHFHFKTSPRCQNAAKEKPSSYLYQQLYYRLKGHRKWIFESVWAGLTELTNKDGEVCNDSSPTQAWSSACLLDLFYDLWDAYEDDS</sequence>
<dbReference type="EC" id="2.4.1.25"/>
<dbReference type="EC" id="3.2.1.33"/>
<dbReference type="EMBL" id="AB018078">
    <property type="protein sequence ID" value="BAA34996.1"/>
    <property type="molecule type" value="Genomic_DNA"/>
</dbReference>
<dbReference type="EMBL" id="U25842">
    <property type="protein sequence ID" value="AAB68117.1"/>
    <property type="molecule type" value="Genomic_DNA"/>
</dbReference>
<dbReference type="EMBL" id="BK006949">
    <property type="protein sequence ID" value="DAA11600.1"/>
    <property type="molecule type" value="Genomic_DNA"/>
</dbReference>
<dbReference type="PIR" id="S59841">
    <property type="entry name" value="S59841"/>
</dbReference>
<dbReference type="RefSeq" id="NP_015510.1">
    <property type="nucleotide sequence ID" value="NM_001184281.1"/>
</dbReference>
<dbReference type="SMR" id="Q06625"/>
<dbReference type="BioGRID" id="36356">
    <property type="interactions" value="46"/>
</dbReference>
<dbReference type="DIP" id="DIP-2578N"/>
<dbReference type="FunCoup" id="Q06625">
    <property type="interactions" value="550"/>
</dbReference>
<dbReference type="IntAct" id="Q06625">
    <property type="interactions" value="14"/>
</dbReference>
<dbReference type="MINT" id="Q06625"/>
<dbReference type="STRING" id="4932.YPR184W"/>
<dbReference type="CAZy" id="GH13">
    <property type="family name" value="Glycoside Hydrolase Family 13"/>
</dbReference>
<dbReference type="CAZy" id="GH133">
    <property type="family name" value="Glycoside Hydrolase Family 133"/>
</dbReference>
<dbReference type="iPTMnet" id="Q06625"/>
<dbReference type="PaxDb" id="4932-YPR184W"/>
<dbReference type="PeptideAtlas" id="Q06625"/>
<dbReference type="TopDownProteomics" id="Q06625"/>
<dbReference type="EnsemblFungi" id="YPR184W_mRNA">
    <property type="protein sequence ID" value="YPR184W"/>
    <property type="gene ID" value="YPR184W"/>
</dbReference>
<dbReference type="GeneID" id="856314"/>
<dbReference type="KEGG" id="sce:YPR184W"/>
<dbReference type="AGR" id="SGD:S000006388"/>
<dbReference type="SGD" id="S000006388">
    <property type="gene designation" value="GDB1"/>
</dbReference>
<dbReference type="VEuPathDB" id="FungiDB:YPR184W"/>
<dbReference type="eggNOG" id="KOG3625">
    <property type="taxonomic scope" value="Eukaryota"/>
</dbReference>
<dbReference type="GeneTree" id="ENSGT00390000012596"/>
<dbReference type="HOGENOM" id="CLU_001517_2_0_1"/>
<dbReference type="InParanoid" id="Q06625"/>
<dbReference type="OMA" id="YEEGHVH"/>
<dbReference type="OrthoDB" id="10248904at2759"/>
<dbReference type="BioCyc" id="MetaCyc:YPR184W-MONOMER"/>
<dbReference type="BioCyc" id="YEAST:YPR184W-MONOMER"/>
<dbReference type="Reactome" id="R-SCE-6798695">
    <property type="pathway name" value="Neutrophil degranulation"/>
</dbReference>
<dbReference type="Reactome" id="R-SCE-70221">
    <property type="pathway name" value="Glycogen breakdown (glycogenolysis)"/>
</dbReference>
<dbReference type="BioGRID-ORCS" id="856314">
    <property type="hits" value="3 hits in 10 CRISPR screens"/>
</dbReference>
<dbReference type="PRO" id="PR:Q06625"/>
<dbReference type="Proteomes" id="UP000002311">
    <property type="component" value="Chromosome XVI"/>
</dbReference>
<dbReference type="RNAct" id="Q06625">
    <property type="molecule type" value="protein"/>
</dbReference>
<dbReference type="GO" id="GO:0005737">
    <property type="term" value="C:cytoplasm"/>
    <property type="evidence" value="ECO:0007005"/>
    <property type="project" value="SGD"/>
</dbReference>
<dbReference type="GO" id="GO:0005739">
    <property type="term" value="C:mitochondrion"/>
    <property type="evidence" value="ECO:0007005"/>
    <property type="project" value="SGD"/>
</dbReference>
<dbReference type="GO" id="GO:0004134">
    <property type="term" value="F:4-alpha-glucanotransferase activity"/>
    <property type="evidence" value="ECO:0000314"/>
    <property type="project" value="SGD"/>
</dbReference>
<dbReference type="GO" id="GO:0004135">
    <property type="term" value="F:amylo-alpha-1,6-glucosidase activity"/>
    <property type="evidence" value="ECO:0000314"/>
    <property type="project" value="SGD"/>
</dbReference>
<dbReference type="GO" id="GO:0005978">
    <property type="term" value="P:glycogen biosynthetic process"/>
    <property type="evidence" value="ECO:0007669"/>
    <property type="project" value="UniProtKB-KW"/>
</dbReference>
<dbReference type="GO" id="GO:0005980">
    <property type="term" value="P:glycogen catabolic process"/>
    <property type="evidence" value="ECO:0000315"/>
    <property type="project" value="SGD"/>
</dbReference>
<dbReference type="CDD" id="cd11327">
    <property type="entry name" value="AmyAc_Glg_debranch_2"/>
    <property type="match status" value="1"/>
</dbReference>
<dbReference type="FunFam" id="3.20.20.80:FF:000070">
    <property type="entry name" value="GDB1p Glycogen debranching enzyme"/>
    <property type="match status" value="1"/>
</dbReference>
<dbReference type="FunFam" id="1.50.10.10:FF:000039">
    <property type="entry name" value="Glycogen debranching enzyme Gdb1, putative"/>
    <property type="match status" value="1"/>
</dbReference>
<dbReference type="FunFam" id="3.20.20.80:FF:000242">
    <property type="entry name" value="Glycogen debranching enzyme Gdb1, putative"/>
    <property type="match status" value="1"/>
</dbReference>
<dbReference type="Gene3D" id="1.50.10.10">
    <property type="match status" value="1"/>
</dbReference>
<dbReference type="Gene3D" id="3.20.20.80">
    <property type="entry name" value="Glycosidases"/>
    <property type="match status" value="2"/>
</dbReference>
<dbReference type="InterPro" id="IPR008928">
    <property type="entry name" value="6-hairpin_glycosidase_sf"/>
</dbReference>
<dbReference type="InterPro" id="IPR012341">
    <property type="entry name" value="6hp_glycosidase-like_sf"/>
</dbReference>
<dbReference type="InterPro" id="IPR010401">
    <property type="entry name" value="AGL/Gdb1"/>
</dbReference>
<dbReference type="InterPro" id="IPR032788">
    <property type="entry name" value="AGL_central"/>
</dbReference>
<dbReference type="InterPro" id="IPR029436">
    <property type="entry name" value="AGL_euk_N"/>
</dbReference>
<dbReference type="InterPro" id="IPR032792">
    <property type="entry name" value="AGL_glucanoTrfase"/>
</dbReference>
<dbReference type="InterPro" id="IPR032790">
    <property type="entry name" value="GDE_C"/>
</dbReference>
<dbReference type="InterPro" id="IPR006421">
    <property type="entry name" value="Glycogen_debranch_met"/>
</dbReference>
<dbReference type="InterPro" id="IPR017853">
    <property type="entry name" value="Glycoside_hydrolase_SF"/>
</dbReference>
<dbReference type="NCBIfam" id="TIGR01531">
    <property type="entry name" value="glyc_debranch"/>
    <property type="match status" value="1"/>
</dbReference>
<dbReference type="PANTHER" id="PTHR10569">
    <property type="entry name" value="GLYCOGEN DEBRANCHING ENZYME"/>
    <property type="match status" value="1"/>
</dbReference>
<dbReference type="PANTHER" id="PTHR10569:SF2">
    <property type="entry name" value="GLYCOGEN DEBRANCHING ENZYME"/>
    <property type="match status" value="1"/>
</dbReference>
<dbReference type="Pfam" id="PF06202">
    <property type="entry name" value="GDE_C"/>
    <property type="match status" value="1"/>
</dbReference>
<dbReference type="Pfam" id="PF14701">
    <property type="entry name" value="hDGE_amylase"/>
    <property type="match status" value="1"/>
</dbReference>
<dbReference type="Pfam" id="PF14702">
    <property type="entry name" value="hGDE_central"/>
    <property type="match status" value="1"/>
</dbReference>
<dbReference type="Pfam" id="PF14699">
    <property type="entry name" value="hGDE_N"/>
    <property type="match status" value="1"/>
</dbReference>
<dbReference type="SUPFAM" id="SSF51445">
    <property type="entry name" value="(Trans)glycosidases"/>
    <property type="match status" value="1"/>
</dbReference>
<dbReference type="SUPFAM" id="SSF48208">
    <property type="entry name" value="Six-hairpin glycosidases"/>
    <property type="match status" value="1"/>
</dbReference>
<evidence type="ECO:0000250" key="1"/>
<evidence type="ECO:0000269" key="2">
    <source>
    </source>
</evidence>
<evidence type="ECO:0000269" key="3">
    <source>
    </source>
</evidence>
<evidence type="ECO:0000269" key="4">
    <source>
    </source>
</evidence>
<evidence type="ECO:0000269" key="5">
    <source>
    </source>
</evidence>
<evidence type="ECO:0000305" key="6"/>
<proteinExistence type="evidence at protein level"/>
<organism>
    <name type="scientific">Saccharomyces cerevisiae (strain ATCC 204508 / S288c)</name>
    <name type="common">Baker's yeast</name>
    <dbReference type="NCBI Taxonomy" id="559292"/>
    <lineage>
        <taxon>Eukaryota</taxon>
        <taxon>Fungi</taxon>
        <taxon>Dikarya</taxon>
        <taxon>Ascomycota</taxon>
        <taxon>Saccharomycotina</taxon>
        <taxon>Saccharomycetes</taxon>
        <taxon>Saccharomycetales</taxon>
        <taxon>Saccharomycetaceae</taxon>
        <taxon>Saccharomyces</taxon>
    </lineage>
</organism>
<gene>
    <name type="primary">GDB1</name>
    <name type="ordered locus">YPR184W</name>
</gene>
<reference key="1">
    <citation type="journal article" date="2000" name="Protein Expr. Purif.">
        <title>High expression of glycogen-debranching enzyme in Escherichia coli and its competent purification method.</title>
        <authorList>
            <person name="Nakayama A."/>
            <person name="Yamamoto K."/>
            <person name="Tabata S."/>
        </authorList>
    </citation>
    <scope>NUCLEOTIDE SEQUENCE [GENOMIC DNA]</scope>
    <scope>PROTEIN SEQUENCE OF 208-216; 302-311; 351-358; 1296-1305 AND 1356-1365</scope>
    <source>
        <strain>ATCC 56960 / D-346</strain>
    </source>
</reference>
<reference key="2">
    <citation type="journal article" date="1997" name="Nature">
        <title>The nucleotide sequence of Saccharomyces cerevisiae chromosome XVI.</title>
        <authorList>
            <person name="Bussey H."/>
            <person name="Storms R.K."/>
            <person name="Ahmed A."/>
            <person name="Albermann K."/>
            <person name="Allen E."/>
            <person name="Ansorge W."/>
            <person name="Araujo R."/>
            <person name="Aparicio A."/>
            <person name="Barrell B.G."/>
            <person name="Badcock K."/>
            <person name="Benes V."/>
            <person name="Botstein D."/>
            <person name="Bowman S."/>
            <person name="Brueckner M."/>
            <person name="Carpenter J."/>
            <person name="Cherry J.M."/>
            <person name="Chung E."/>
            <person name="Churcher C.M."/>
            <person name="Coster F."/>
            <person name="Davis K."/>
            <person name="Davis R.W."/>
            <person name="Dietrich F.S."/>
            <person name="Delius H."/>
            <person name="DiPaolo T."/>
            <person name="Dubois E."/>
            <person name="Duesterhoeft A."/>
            <person name="Duncan M."/>
            <person name="Floeth M."/>
            <person name="Fortin N."/>
            <person name="Friesen J.D."/>
            <person name="Fritz C."/>
            <person name="Goffeau A."/>
            <person name="Hall J."/>
            <person name="Hebling U."/>
            <person name="Heumann K."/>
            <person name="Hilbert H."/>
            <person name="Hillier L.W."/>
            <person name="Hunicke-Smith S."/>
            <person name="Hyman R.W."/>
            <person name="Johnston M."/>
            <person name="Kalman S."/>
            <person name="Kleine K."/>
            <person name="Komp C."/>
            <person name="Kurdi O."/>
            <person name="Lashkari D."/>
            <person name="Lew H."/>
            <person name="Lin A."/>
            <person name="Lin D."/>
            <person name="Louis E.J."/>
            <person name="Marathe R."/>
            <person name="Messenguy F."/>
            <person name="Mewes H.-W."/>
            <person name="Mirtipati S."/>
            <person name="Moestl D."/>
            <person name="Mueller-Auer S."/>
            <person name="Namath A."/>
            <person name="Nentwich U."/>
            <person name="Oefner P."/>
            <person name="Pearson D."/>
            <person name="Petel F.X."/>
            <person name="Pohl T.M."/>
            <person name="Purnelle B."/>
            <person name="Rajandream M.A."/>
            <person name="Rechmann S."/>
            <person name="Rieger M."/>
            <person name="Riles L."/>
            <person name="Roberts D."/>
            <person name="Schaefer M."/>
            <person name="Scharfe M."/>
            <person name="Scherens B."/>
            <person name="Schramm S."/>
            <person name="Schroeder M."/>
            <person name="Sdicu A.-M."/>
            <person name="Tettelin H."/>
            <person name="Urrestarazu L.A."/>
            <person name="Ushinsky S."/>
            <person name="Vierendeels F."/>
            <person name="Vissers S."/>
            <person name="Voss H."/>
            <person name="Walsh S.V."/>
            <person name="Wambutt R."/>
            <person name="Wang Y."/>
            <person name="Wedler E."/>
            <person name="Wedler H."/>
            <person name="Winnett E."/>
            <person name="Zhong W.-W."/>
            <person name="Zollner A."/>
            <person name="Vo D.H."/>
            <person name="Hani J."/>
        </authorList>
    </citation>
    <scope>NUCLEOTIDE SEQUENCE [LARGE SCALE GENOMIC DNA]</scope>
    <source>
        <strain>ATCC 204508 / S288c</strain>
    </source>
</reference>
<reference key="3">
    <citation type="journal article" date="2014" name="G3 (Bethesda)">
        <title>The reference genome sequence of Saccharomyces cerevisiae: Then and now.</title>
        <authorList>
            <person name="Engel S.R."/>
            <person name="Dietrich F.S."/>
            <person name="Fisk D.G."/>
            <person name="Binkley G."/>
            <person name="Balakrishnan R."/>
            <person name="Costanzo M.C."/>
            <person name="Dwight S.S."/>
            <person name="Hitz B.C."/>
            <person name="Karra K."/>
            <person name="Nash R.S."/>
            <person name="Weng S."/>
            <person name="Wong E.D."/>
            <person name="Lloyd P."/>
            <person name="Skrzypek M.S."/>
            <person name="Miyasato S.R."/>
            <person name="Simison M."/>
            <person name="Cherry J.M."/>
        </authorList>
    </citation>
    <scope>GENOME REANNOTATION</scope>
    <source>
        <strain>ATCC 204508 / S288c</strain>
    </source>
</reference>
<reference key="4">
    <citation type="journal article" date="2000" name="FEMS Microbiol. Lett.">
        <title>The Saccharomyces cerevisiae YPR184w gene encodes the glycogen debranching enzyme.</title>
        <authorList>
            <person name="Teste M.A."/>
            <person name="Enjalbert B."/>
            <person name="Parrou J.L."/>
            <person name="Francois J.M."/>
        </authorList>
    </citation>
    <scope>FUNCTION</scope>
</reference>
<reference key="5">
    <citation type="journal article" date="2003" name="Nature">
        <title>Global analysis of protein localization in budding yeast.</title>
        <authorList>
            <person name="Huh W.-K."/>
            <person name="Falvo J.V."/>
            <person name="Gerke L.C."/>
            <person name="Carroll A.S."/>
            <person name="Howson R.W."/>
            <person name="Weissman J.S."/>
            <person name="O'Shea E.K."/>
        </authorList>
    </citation>
    <scope>SUBCELLULAR LOCATION [LARGE SCALE ANALYSIS]</scope>
</reference>
<reference key="6">
    <citation type="journal article" date="2003" name="Nature">
        <title>Global analysis of protein expression in yeast.</title>
        <authorList>
            <person name="Ghaemmaghami S."/>
            <person name="Huh W.-K."/>
            <person name="Bower K."/>
            <person name="Howson R.W."/>
            <person name="Belle A."/>
            <person name="Dephoure N."/>
            <person name="O'Shea E.K."/>
            <person name="Weissman J.S."/>
        </authorList>
    </citation>
    <scope>LEVEL OF PROTEIN EXPRESSION [LARGE SCALE ANALYSIS]</scope>
</reference>
<reference key="7">
    <citation type="journal article" date="2007" name="Mol. Cell. Proteomics">
        <title>Profiling phosphoproteins of yeast mitochondria reveals a role of phosphorylation in assembly of the ATP synthase.</title>
        <authorList>
            <person name="Reinders J."/>
            <person name="Wagner K."/>
            <person name="Zahedi R.P."/>
            <person name="Stojanovski D."/>
            <person name="Eyrich B."/>
            <person name="van der Laan M."/>
            <person name="Rehling P."/>
            <person name="Sickmann A."/>
            <person name="Pfanner N."/>
            <person name="Meisinger C."/>
        </authorList>
    </citation>
    <scope>IDENTIFICATION BY MASS SPECTROMETRY [LARGE SCALE ANALYSIS]</scope>
    <source>
        <strain>ATCC 76625 / YPH499</strain>
    </source>
</reference>
<reference key="8">
    <citation type="journal article" date="2011" name="FEMS Yeast Res.">
        <title>The Saccharomyces cerevisiae fermentation stress response protein Igd1p/Yfr017p regulates glycogen levels by inhibiting the glycogen debranching enzyme.</title>
        <authorList>
            <person name="Walkey C.J."/>
            <person name="Luo Z."/>
            <person name="Borchers C.H."/>
            <person name="Measday V."/>
            <person name="van Vuuren H.J."/>
        </authorList>
    </citation>
    <scope>INTERACTION WITH IGD1</scope>
    <scope>ACTIVITY REGULATION</scope>
    <scope>FUNCTION</scope>
</reference>